<proteinExistence type="evidence at protein level"/>
<name>BICD1_HUMAN</name>
<accession>Q96G01</accession>
<accession>A8K2C3</accession>
<accession>F8W113</accession>
<accession>O43892</accession>
<accession>O43893</accession>
<protein>
    <recommendedName>
        <fullName>Protein bicaudal D homolog 1</fullName>
        <shortName>Bic-D 1</shortName>
    </recommendedName>
</protein>
<organism>
    <name type="scientific">Homo sapiens</name>
    <name type="common">Human</name>
    <dbReference type="NCBI Taxonomy" id="9606"/>
    <lineage>
        <taxon>Eukaryota</taxon>
        <taxon>Metazoa</taxon>
        <taxon>Chordata</taxon>
        <taxon>Craniata</taxon>
        <taxon>Vertebrata</taxon>
        <taxon>Euteleostomi</taxon>
        <taxon>Mammalia</taxon>
        <taxon>Eutheria</taxon>
        <taxon>Euarchontoglires</taxon>
        <taxon>Primates</taxon>
        <taxon>Haplorrhini</taxon>
        <taxon>Catarrhini</taxon>
        <taxon>Hominidae</taxon>
        <taxon>Homo</taxon>
    </lineage>
</organism>
<sequence>MAAEEVLQTVDHYKTEIERLTKELTETTHEKIQAAEYGLVVLEEKLTLKQQYDELEAEYDSLKQELEQLKEAFGQSFSIHRKVAEDGETREETLLQESASKEAYYLGKILEMQNELKQSRAVVTNVQAENERLTAVVQDLKENNEMVELQRIRMKDEIREYKFREARLLQDYTELEEENITLQKLVSTLKQNQVEYEGLKHEIKRFEEETVLLNSQLEDAIRLKEIAEHQLEEALETLKNEREQKNNLRKELSQYISLNDNHISISVDGLKFAEDGSEPNNDDKMNGHIHGPLVKLNGDYRTPTLRKGESLNPVSDLFSELNISEIQKLKQQLMQVEREKAILLANLQESQTQLEHTKGALTEQHERVHRLTEHVNAMRGLQSSKELKAELDGEKGRDSGEEAHDYEVDINGLEILECKYRVAVTEVIDLKAEIKALKEKYNKSVENYTDEKAKYESKIQMYDEQVTSLEKTTKESGEKMAHMEKELQKMTSIANENHSTLNTAQDELVTFSEELAQLYHHVCLCNNETPNRVMLDYYRQSRVTRSGSLKGPDDPRGLLSPRLARRGVSSPVETRTSSEPVAKESTEASKEPSPTKTPTISPVITAPPSSPVLDTSDIRKEPMNIYNLNAIIRDQIKHLQKAVDRSLQLSRQRAAARELAPMIDKDKEALMEEILKLKSLLSTKREQIATLRAVLKANKQTAEVALANLKNKYENEKAMVTETMTKLRNELKALKEDAATFSSLRAMFATRCDEYVTQLDEMQRQLAAAEDEKKTLNTLLRMAIQQKLALTQRLEDLEFDHEQSRRSKGKLGKSKIGSPKVSGEASVTVPTIDTYLLHSQGPQTPNIRVSSGTQRKRQFSPSLCDQSRPRTSGASYLQNLLRVPPDPTSTESFLLKGPPSMSEFIQGHRLSKEKRLTVAPPDCQQPAASVPPQCSQLAGRQDCPTVSPDTALPEEQPHSSSQCAPLHCLSKPPHP</sequence>
<reference key="1">
    <citation type="journal article" date="1997" name="Genomics">
        <title>A human homologue (BICD1) of the Drosophila bicaudal-D gene.</title>
        <authorList>
            <person name="Baens M."/>
            <person name="Marynen P."/>
        </authorList>
    </citation>
    <scope>NUCLEOTIDE SEQUENCE [MRNA] (ISOFORM 1)</scope>
    <scope>NUCLEOTIDE SEQUENCE [MRNA] OF 702-975 (ISOFORM 3)</scope>
</reference>
<reference key="2">
    <citation type="journal article" date="2004" name="Nat. Genet.">
        <title>Complete sequencing and characterization of 21,243 full-length human cDNAs.</title>
        <authorList>
            <person name="Ota T."/>
            <person name="Suzuki Y."/>
            <person name="Nishikawa T."/>
            <person name="Otsuki T."/>
            <person name="Sugiyama T."/>
            <person name="Irie R."/>
            <person name="Wakamatsu A."/>
            <person name="Hayashi K."/>
            <person name="Sato H."/>
            <person name="Nagai K."/>
            <person name="Kimura K."/>
            <person name="Makita H."/>
            <person name="Sekine M."/>
            <person name="Obayashi M."/>
            <person name="Nishi T."/>
            <person name="Shibahara T."/>
            <person name="Tanaka T."/>
            <person name="Ishii S."/>
            <person name="Yamamoto J."/>
            <person name="Saito K."/>
            <person name="Kawai Y."/>
            <person name="Isono Y."/>
            <person name="Nakamura Y."/>
            <person name="Nagahari K."/>
            <person name="Murakami K."/>
            <person name="Yasuda T."/>
            <person name="Iwayanagi T."/>
            <person name="Wagatsuma M."/>
            <person name="Shiratori A."/>
            <person name="Sudo H."/>
            <person name="Hosoiri T."/>
            <person name="Kaku Y."/>
            <person name="Kodaira H."/>
            <person name="Kondo H."/>
            <person name="Sugawara M."/>
            <person name="Takahashi M."/>
            <person name="Kanda K."/>
            <person name="Yokoi T."/>
            <person name="Furuya T."/>
            <person name="Kikkawa E."/>
            <person name="Omura Y."/>
            <person name="Abe K."/>
            <person name="Kamihara K."/>
            <person name="Katsuta N."/>
            <person name="Sato K."/>
            <person name="Tanikawa M."/>
            <person name="Yamazaki M."/>
            <person name="Ninomiya K."/>
            <person name="Ishibashi T."/>
            <person name="Yamashita H."/>
            <person name="Murakawa K."/>
            <person name="Fujimori K."/>
            <person name="Tanai H."/>
            <person name="Kimata M."/>
            <person name="Watanabe M."/>
            <person name="Hiraoka S."/>
            <person name="Chiba Y."/>
            <person name="Ishida S."/>
            <person name="Ono Y."/>
            <person name="Takiguchi S."/>
            <person name="Watanabe S."/>
            <person name="Yosida M."/>
            <person name="Hotuta T."/>
            <person name="Kusano J."/>
            <person name="Kanehori K."/>
            <person name="Takahashi-Fujii A."/>
            <person name="Hara H."/>
            <person name="Tanase T.-O."/>
            <person name="Nomura Y."/>
            <person name="Togiya S."/>
            <person name="Komai F."/>
            <person name="Hara R."/>
            <person name="Takeuchi K."/>
            <person name="Arita M."/>
            <person name="Imose N."/>
            <person name="Musashino K."/>
            <person name="Yuuki H."/>
            <person name="Oshima A."/>
            <person name="Sasaki N."/>
            <person name="Aotsuka S."/>
            <person name="Yoshikawa Y."/>
            <person name="Matsunawa H."/>
            <person name="Ichihara T."/>
            <person name="Shiohata N."/>
            <person name="Sano S."/>
            <person name="Moriya S."/>
            <person name="Momiyama H."/>
            <person name="Satoh N."/>
            <person name="Takami S."/>
            <person name="Terashima Y."/>
            <person name="Suzuki O."/>
            <person name="Nakagawa S."/>
            <person name="Senoh A."/>
            <person name="Mizoguchi H."/>
            <person name="Goto Y."/>
            <person name="Shimizu F."/>
            <person name="Wakebe H."/>
            <person name="Hishigaki H."/>
            <person name="Watanabe T."/>
            <person name="Sugiyama A."/>
            <person name="Takemoto M."/>
            <person name="Kawakami B."/>
            <person name="Yamazaki M."/>
            <person name="Watanabe K."/>
            <person name="Kumagai A."/>
            <person name="Itakura S."/>
            <person name="Fukuzumi Y."/>
            <person name="Fujimori Y."/>
            <person name="Komiyama M."/>
            <person name="Tashiro H."/>
            <person name="Tanigami A."/>
            <person name="Fujiwara T."/>
            <person name="Ono T."/>
            <person name="Yamada K."/>
            <person name="Fujii Y."/>
            <person name="Ozaki K."/>
            <person name="Hirao M."/>
            <person name="Ohmori Y."/>
            <person name="Kawabata A."/>
            <person name="Hikiji T."/>
            <person name="Kobatake N."/>
            <person name="Inagaki H."/>
            <person name="Ikema Y."/>
            <person name="Okamoto S."/>
            <person name="Okitani R."/>
            <person name="Kawakami T."/>
            <person name="Noguchi S."/>
            <person name="Itoh T."/>
            <person name="Shigeta K."/>
            <person name="Senba T."/>
            <person name="Matsumura K."/>
            <person name="Nakajima Y."/>
            <person name="Mizuno T."/>
            <person name="Morinaga M."/>
            <person name="Sasaki M."/>
            <person name="Togashi T."/>
            <person name="Oyama M."/>
            <person name="Hata H."/>
            <person name="Watanabe M."/>
            <person name="Komatsu T."/>
            <person name="Mizushima-Sugano J."/>
            <person name="Satoh T."/>
            <person name="Shirai Y."/>
            <person name="Takahashi Y."/>
            <person name="Nakagawa K."/>
            <person name="Okumura K."/>
            <person name="Nagase T."/>
            <person name="Nomura N."/>
            <person name="Kikuchi H."/>
            <person name="Masuho Y."/>
            <person name="Yamashita R."/>
            <person name="Nakai K."/>
            <person name="Yada T."/>
            <person name="Nakamura Y."/>
            <person name="Ohara O."/>
            <person name="Isogai T."/>
            <person name="Sugano S."/>
        </authorList>
    </citation>
    <scope>NUCLEOTIDE SEQUENCE [LARGE SCALE MRNA] (ISOFORMS 1 AND 4)</scope>
    <scope>VARIANT ALA-778</scope>
    <source>
        <tissue>Cerebellum</tissue>
        <tissue>Thalamus</tissue>
    </source>
</reference>
<reference key="3">
    <citation type="journal article" date="2006" name="Nature">
        <title>The finished DNA sequence of human chromosome 12.</title>
        <authorList>
            <person name="Scherer S.E."/>
            <person name="Muzny D.M."/>
            <person name="Buhay C.J."/>
            <person name="Chen R."/>
            <person name="Cree A."/>
            <person name="Ding Y."/>
            <person name="Dugan-Rocha S."/>
            <person name="Gill R."/>
            <person name="Gunaratne P."/>
            <person name="Harris R.A."/>
            <person name="Hawes A.C."/>
            <person name="Hernandez J."/>
            <person name="Hodgson A.V."/>
            <person name="Hume J."/>
            <person name="Jackson A."/>
            <person name="Khan Z.M."/>
            <person name="Kovar-Smith C."/>
            <person name="Lewis L.R."/>
            <person name="Lozado R.J."/>
            <person name="Metzker M.L."/>
            <person name="Milosavljevic A."/>
            <person name="Miner G.R."/>
            <person name="Montgomery K.T."/>
            <person name="Morgan M.B."/>
            <person name="Nazareth L.V."/>
            <person name="Scott G."/>
            <person name="Sodergren E."/>
            <person name="Song X.-Z."/>
            <person name="Steffen D."/>
            <person name="Lovering R.C."/>
            <person name="Wheeler D.A."/>
            <person name="Worley K.C."/>
            <person name="Yuan Y."/>
            <person name="Zhang Z."/>
            <person name="Adams C.Q."/>
            <person name="Ansari-Lari M.A."/>
            <person name="Ayele M."/>
            <person name="Brown M.J."/>
            <person name="Chen G."/>
            <person name="Chen Z."/>
            <person name="Clerc-Blankenburg K.P."/>
            <person name="Davis C."/>
            <person name="Delgado O."/>
            <person name="Dinh H.H."/>
            <person name="Draper H."/>
            <person name="Gonzalez-Garay M.L."/>
            <person name="Havlak P."/>
            <person name="Jackson L.R."/>
            <person name="Jacob L.S."/>
            <person name="Kelly S.H."/>
            <person name="Li L."/>
            <person name="Li Z."/>
            <person name="Liu J."/>
            <person name="Liu W."/>
            <person name="Lu J."/>
            <person name="Maheshwari M."/>
            <person name="Nguyen B.-V."/>
            <person name="Okwuonu G.O."/>
            <person name="Pasternak S."/>
            <person name="Perez L.M."/>
            <person name="Plopper F.J.H."/>
            <person name="Santibanez J."/>
            <person name="Shen H."/>
            <person name="Tabor P.E."/>
            <person name="Verduzco D."/>
            <person name="Waldron L."/>
            <person name="Wang Q."/>
            <person name="Williams G.A."/>
            <person name="Zhang J."/>
            <person name="Zhou J."/>
            <person name="Allen C.C."/>
            <person name="Amin A.G."/>
            <person name="Anyalebechi V."/>
            <person name="Bailey M."/>
            <person name="Barbaria J.A."/>
            <person name="Bimage K.E."/>
            <person name="Bryant N.P."/>
            <person name="Burch P.E."/>
            <person name="Burkett C.E."/>
            <person name="Burrell K.L."/>
            <person name="Calderon E."/>
            <person name="Cardenas V."/>
            <person name="Carter K."/>
            <person name="Casias K."/>
            <person name="Cavazos I."/>
            <person name="Cavazos S.R."/>
            <person name="Ceasar H."/>
            <person name="Chacko J."/>
            <person name="Chan S.N."/>
            <person name="Chavez D."/>
            <person name="Christopoulos C."/>
            <person name="Chu J."/>
            <person name="Cockrell R."/>
            <person name="Cox C.D."/>
            <person name="Dang M."/>
            <person name="Dathorne S.R."/>
            <person name="David R."/>
            <person name="Davis C.M."/>
            <person name="Davy-Carroll L."/>
            <person name="Deshazo D.R."/>
            <person name="Donlin J.E."/>
            <person name="D'Souza L."/>
            <person name="Eaves K.A."/>
            <person name="Egan A."/>
            <person name="Emery-Cohen A.J."/>
            <person name="Escotto M."/>
            <person name="Flagg N."/>
            <person name="Forbes L.D."/>
            <person name="Gabisi A.M."/>
            <person name="Garza M."/>
            <person name="Hamilton C."/>
            <person name="Henderson N."/>
            <person name="Hernandez O."/>
            <person name="Hines S."/>
            <person name="Hogues M.E."/>
            <person name="Huang M."/>
            <person name="Idlebird D.G."/>
            <person name="Johnson R."/>
            <person name="Jolivet A."/>
            <person name="Jones S."/>
            <person name="Kagan R."/>
            <person name="King L.M."/>
            <person name="Leal B."/>
            <person name="Lebow H."/>
            <person name="Lee S."/>
            <person name="LeVan J.M."/>
            <person name="Lewis L.C."/>
            <person name="London P."/>
            <person name="Lorensuhewa L.M."/>
            <person name="Loulseged H."/>
            <person name="Lovett D.A."/>
            <person name="Lucier A."/>
            <person name="Lucier R.L."/>
            <person name="Ma J."/>
            <person name="Madu R.C."/>
            <person name="Mapua P."/>
            <person name="Martindale A.D."/>
            <person name="Martinez E."/>
            <person name="Massey E."/>
            <person name="Mawhiney S."/>
            <person name="Meador M.G."/>
            <person name="Mendez S."/>
            <person name="Mercado C."/>
            <person name="Mercado I.C."/>
            <person name="Merritt C.E."/>
            <person name="Miner Z.L."/>
            <person name="Minja E."/>
            <person name="Mitchell T."/>
            <person name="Mohabbat F."/>
            <person name="Mohabbat K."/>
            <person name="Montgomery B."/>
            <person name="Moore N."/>
            <person name="Morris S."/>
            <person name="Munidasa M."/>
            <person name="Ngo R.N."/>
            <person name="Nguyen N.B."/>
            <person name="Nickerson E."/>
            <person name="Nwaokelemeh O.O."/>
            <person name="Nwokenkwo S."/>
            <person name="Obregon M."/>
            <person name="Oguh M."/>
            <person name="Oragunye N."/>
            <person name="Oviedo R.J."/>
            <person name="Parish B.J."/>
            <person name="Parker D.N."/>
            <person name="Parrish J."/>
            <person name="Parks K.L."/>
            <person name="Paul H.A."/>
            <person name="Payton B.A."/>
            <person name="Perez A."/>
            <person name="Perrin W."/>
            <person name="Pickens A."/>
            <person name="Primus E.L."/>
            <person name="Pu L.-L."/>
            <person name="Puazo M."/>
            <person name="Quiles M.M."/>
            <person name="Quiroz J.B."/>
            <person name="Rabata D."/>
            <person name="Reeves K."/>
            <person name="Ruiz S.J."/>
            <person name="Shao H."/>
            <person name="Sisson I."/>
            <person name="Sonaike T."/>
            <person name="Sorelle R.P."/>
            <person name="Sutton A.E."/>
            <person name="Svatek A.F."/>
            <person name="Svetz L.A."/>
            <person name="Tamerisa K.S."/>
            <person name="Taylor T.R."/>
            <person name="Teague B."/>
            <person name="Thomas N."/>
            <person name="Thorn R.D."/>
            <person name="Trejos Z.Y."/>
            <person name="Trevino B.K."/>
            <person name="Ukegbu O.N."/>
            <person name="Urban J.B."/>
            <person name="Vasquez L.I."/>
            <person name="Vera V.A."/>
            <person name="Villasana D.M."/>
            <person name="Wang L."/>
            <person name="Ward-Moore S."/>
            <person name="Warren J.T."/>
            <person name="Wei X."/>
            <person name="White F."/>
            <person name="Williamson A.L."/>
            <person name="Wleczyk R."/>
            <person name="Wooden H.S."/>
            <person name="Wooden S.H."/>
            <person name="Yen J."/>
            <person name="Yoon L."/>
            <person name="Yoon V."/>
            <person name="Zorrilla S.E."/>
            <person name="Nelson D."/>
            <person name="Kucherlapati R."/>
            <person name="Weinstock G."/>
            <person name="Gibbs R.A."/>
        </authorList>
    </citation>
    <scope>NUCLEOTIDE SEQUENCE [LARGE SCALE GENOMIC DNA]</scope>
</reference>
<reference key="4">
    <citation type="submission" date="2005-09" db="EMBL/GenBank/DDBJ databases">
        <authorList>
            <person name="Mural R.J."/>
            <person name="Istrail S."/>
            <person name="Sutton G.G."/>
            <person name="Florea L."/>
            <person name="Halpern A.L."/>
            <person name="Mobarry C.M."/>
            <person name="Lippert R."/>
            <person name="Walenz B."/>
            <person name="Shatkay H."/>
            <person name="Dew I."/>
            <person name="Miller J.R."/>
            <person name="Flanigan M.J."/>
            <person name="Edwards N.J."/>
            <person name="Bolanos R."/>
            <person name="Fasulo D."/>
            <person name="Halldorsson B.V."/>
            <person name="Hannenhalli S."/>
            <person name="Turner R."/>
            <person name="Yooseph S."/>
            <person name="Lu F."/>
            <person name="Nusskern D.R."/>
            <person name="Shue B.C."/>
            <person name="Zheng X.H."/>
            <person name="Zhong F."/>
            <person name="Delcher A.L."/>
            <person name="Huson D.H."/>
            <person name="Kravitz S.A."/>
            <person name="Mouchard L."/>
            <person name="Reinert K."/>
            <person name="Remington K.A."/>
            <person name="Clark A.G."/>
            <person name="Waterman M.S."/>
            <person name="Eichler E.E."/>
            <person name="Adams M.D."/>
            <person name="Hunkapiller M.W."/>
            <person name="Myers E.W."/>
            <person name="Venter J.C."/>
        </authorList>
    </citation>
    <scope>NUCLEOTIDE SEQUENCE [LARGE SCALE GENOMIC DNA]</scope>
</reference>
<reference key="5">
    <citation type="journal article" date="2004" name="Genome Res.">
        <title>The status, quality, and expansion of the NIH full-length cDNA project: the Mammalian Gene Collection (MGC).</title>
        <authorList>
            <consortium name="The MGC Project Team"/>
        </authorList>
    </citation>
    <scope>NUCLEOTIDE SEQUENCE [LARGE SCALE MRNA] (ISOFORM 2)</scope>
    <source>
        <tissue>Skin</tissue>
    </source>
</reference>
<reference key="6">
    <citation type="journal article" date="2002" name="Nat. Cell Biol.">
        <title>Bicaudal-D regulates COPI-independent Golgi-ER transport by recruiting the dynein-dynactin motor complex.</title>
        <authorList>
            <person name="Matanis T."/>
            <person name="Akhmanova A."/>
            <person name="Wulf P."/>
            <person name="Del Nery E."/>
            <person name="Weide T."/>
            <person name="Stepanova T."/>
            <person name="Galjart N."/>
            <person name="Grosveld F."/>
            <person name="Goud B."/>
            <person name="De Zeeuw C.I."/>
            <person name="Barnekow A."/>
            <person name="Hoogenraad C.C."/>
        </authorList>
    </citation>
    <scope>CHARACTERIZATION</scope>
</reference>
<reference key="7">
    <citation type="journal article" date="2007" name="Exp. Cell Res.">
        <title>A role for the Rab6B Bicaudal-D1 interaction in retrograde transport in neuronal cells.</title>
        <authorList>
            <person name="Wanschers B.F.J.F."/>
            <person name="van de Vorstenbosch R."/>
            <person name="Schlager M.A."/>
            <person name="Splinter D."/>
            <person name="Akhmanova A."/>
            <person name="Hoogenraad C.C."/>
            <person name="Wieringa B."/>
            <person name="Fransen J.A."/>
        </authorList>
    </citation>
    <scope>INTERACTION WITH RAB6B</scope>
</reference>
<reference key="8">
    <citation type="journal article" date="2010" name="J. Virol.">
        <title>Bicaudal D1-dependent trafficking of human cytomegalovirus tegument protein pp150 in virus-infected cells.</title>
        <authorList>
            <person name="Indran S.V."/>
            <person name="Ballestas M.E."/>
            <person name="Britt W.J."/>
        </authorList>
    </citation>
    <scope>INTERACTION WITH HHV-5 PROTEIN UL32 (MICROBIAL INFECTION)</scope>
</reference>
<reference key="9">
    <citation type="journal article" date="2013" name="J. Proteome Res.">
        <title>Toward a comprehensive characterization of a human cancer cell phosphoproteome.</title>
        <authorList>
            <person name="Zhou H."/>
            <person name="Di Palma S."/>
            <person name="Preisinger C."/>
            <person name="Peng M."/>
            <person name="Polat A.N."/>
            <person name="Heck A.J."/>
            <person name="Mohammed S."/>
        </authorList>
    </citation>
    <scope>IDENTIFICATION BY MASS SPECTROMETRY [LARGE SCALE ANALYSIS]</scope>
    <source>
        <tissue>Cervix carcinoma</tissue>
    </source>
</reference>
<comment type="function">
    <text>Regulates coat complex coatomer protein I (COPI)-independent Golgi-endoplasmic reticulum transport by recruiting the dynein-dynactin motor complex.</text>
</comment>
<comment type="subunit">
    <text evidence="1 5">Interacts with RAB6A. Interacts (via C-terminus) with RAB6B (GTP-bound); the interaction is direct. Interacts with CLIP-115 and KIFC2 (By similarity).</text>
</comment>
<comment type="subunit">
    <text evidence="6">(Microbial infection) Interacts with human cytomegalovirus/HHV-5 protein UL32.</text>
</comment>
<comment type="interaction">
    <interactant intactId="EBI-1104509">
        <id>Q96G01</id>
    </interactant>
    <interactant intactId="EBI-373586">
        <id>P49841</id>
        <label>GSK3B</label>
    </interactant>
    <organismsDiffer>false</organismsDiffer>
    <experiments>7</experiments>
</comment>
<comment type="interaction">
    <interactant intactId="EBI-1104509">
        <id>Q96G01</id>
    </interactant>
    <interactant intactId="EBI-518675">
        <id>P40763</id>
        <label>STAT3</label>
    </interactant>
    <organismsDiffer>false</organismsDiffer>
    <experiments>2</experiments>
</comment>
<comment type="interaction">
    <interactant intactId="EBI-36944577">
        <id>Q96G01-4</id>
    </interactant>
    <interactant intactId="EBI-724478">
        <id>Q9H3S7</id>
        <label>PTPN23</label>
    </interactant>
    <organismsDiffer>false</organismsDiffer>
    <experiments>4</experiments>
</comment>
<comment type="subcellular location">
    <subcellularLocation>
        <location>Golgi apparatus</location>
    </subcellularLocation>
</comment>
<comment type="alternative products">
    <event type="alternative splicing"/>
    <isoform>
        <id>Q96G01-1</id>
        <name>1</name>
        <sequence type="displayed"/>
    </isoform>
    <isoform>
        <id>Q96G01-2</id>
        <name>2</name>
        <sequence type="described" ref="VSP_007961 VSP_007962"/>
    </isoform>
    <isoform>
        <id>Q96G01-3</id>
        <name>3</name>
        <sequence type="described" ref="VSP_007963 VSP_007964"/>
    </isoform>
    <isoform>
        <id>Q96G01-4</id>
        <name>4</name>
        <sequence type="described" ref="VSP_045637 VSP_045638"/>
    </isoform>
</comment>
<comment type="tissue specificity">
    <text>Expressed in the brain, heart and skeletal muscle.</text>
</comment>
<comment type="miscellaneous">
    <molecule>Isoform 2</molecule>
    <text evidence="10">Due to intron retention.</text>
</comment>
<comment type="miscellaneous">
    <molecule>Isoform 3</molecule>
    <text evidence="10">Due to intron retention.</text>
</comment>
<comment type="similarity">
    <text evidence="10">Belongs to the BicD family.</text>
</comment>
<dbReference type="EMBL" id="U90028">
    <property type="protein sequence ID" value="AAB94805.1"/>
    <property type="molecule type" value="mRNA"/>
</dbReference>
<dbReference type="EMBL" id="U90030">
    <property type="protein sequence ID" value="AAB94806.1"/>
    <property type="molecule type" value="mRNA"/>
</dbReference>
<dbReference type="EMBL" id="AK290188">
    <property type="protein sequence ID" value="BAF82877.1"/>
    <property type="molecule type" value="mRNA"/>
</dbReference>
<dbReference type="EMBL" id="AK313430">
    <property type="status" value="NOT_ANNOTATED_CDS"/>
    <property type="molecule type" value="mRNA"/>
</dbReference>
<dbReference type="EMBL" id="AC016954">
    <property type="status" value="NOT_ANNOTATED_CDS"/>
    <property type="molecule type" value="Genomic_DNA"/>
</dbReference>
<dbReference type="EMBL" id="AC026356">
    <property type="status" value="NOT_ANNOTATED_CDS"/>
    <property type="molecule type" value="Genomic_DNA"/>
</dbReference>
<dbReference type="EMBL" id="AC048344">
    <property type="status" value="NOT_ANNOTATED_CDS"/>
    <property type="molecule type" value="Genomic_DNA"/>
</dbReference>
<dbReference type="EMBL" id="AC087245">
    <property type="status" value="NOT_ANNOTATED_CDS"/>
    <property type="molecule type" value="Genomic_DNA"/>
</dbReference>
<dbReference type="EMBL" id="AC087316">
    <property type="status" value="NOT_ANNOTATED_CDS"/>
    <property type="molecule type" value="Genomic_DNA"/>
</dbReference>
<dbReference type="EMBL" id="CH471116">
    <property type="protein sequence ID" value="EAW88534.1"/>
    <property type="molecule type" value="Genomic_DNA"/>
</dbReference>
<dbReference type="EMBL" id="BC010091">
    <property type="status" value="NOT_ANNOTATED_CDS"/>
    <property type="molecule type" value="mRNA"/>
</dbReference>
<dbReference type="CCDS" id="CCDS44859.1">
    <molecule id="Q96G01-4"/>
</dbReference>
<dbReference type="CCDS" id="CCDS8726.1">
    <molecule id="Q96G01-1"/>
</dbReference>
<dbReference type="RefSeq" id="NP_001003398.1">
    <molecule id="Q96G01-4"/>
    <property type="nucleotide sequence ID" value="NM_001003398.3"/>
</dbReference>
<dbReference type="RefSeq" id="NP_001400084.1">
    <molecule id="Q96G01-4"/>
    <property type="nucleotide sequence ID" value="NM_001413155.1"/>
</dbReference>
<dbReference type="RefSeq" id="NP_001705.2">
    <molecule id="Q96G01-1"/>
    <property type="nucleotide sequence ID" value="NM_001714.4"/>
</dbReference>
<dbReference type="RefSeq" id="XP_047285281.1">
    <molecule id="Q96G01-4"/>
    <property type="nucleotide sequence ID" value="XM_047429325.1"/>
</dbReference>
<dbReference type="RefSeq" id="XP_054228835.1">
    <molecule id="Q96G01-4"/>
    <property type="nucleotide sequence ID" value="XM_054372860.1"/>
</dbReference>
<dbReference type="SMR" id="Q96G01"/>
<dbReference type="BioGRID" id="107105">
    <property type="interactions" value="229"/>
</dbReference>
<dbReference type="FunCoup" id="Q96G01">
    <property type="interactions" value="2006"/>
</dbReference>
<dbReference type="IntAct" id="Q96G01">
    <property type="interactions" value="32"/>
</dbReference>
<dbReference type="MINT" id="Q96G01"/>
<dbReference type="STRING" id="9606.ENSP00000498700"/>
<dbReference type="iPTMnet" id="Q96G01"/>
<dbReference type="PhosphoSitePlus" id="Q96G01"/>
<dbReference type="BioMuta" id="BICD1"/>
<dbReference type="DMDM" id="209572759"/>
<dbReference type="jPOST" id="Q96G01"/>
<dbReference type="MassIVE" id="Q96G01"/>
<dbReference type="PaxDb" id="9606-ENSP00000281474"/>
<dbReference type="PeptideAtlas" id="Q96G01"/>
<dbReference type="ProteomicsDB" id="29543"/>
<dbReference type="ProteomicsDB" id="76577">
    <molecule id="Q96G01-1"/>
</dbReference>
<dbReference type="ProteomicsDB" id="76578">
    <molecule id="Q96G01-2"/>
</dbReference>
<dbReference type="ProteomicsDB" id="76579">
    <molecule id="Q96G01-3"/>
</dbReference>
<dbReference type="Pumba" id="Q96G01"/>
<dbReference type="Antibodypedia" id="24706">
    <property type="antibodies" value="67 antibodies from 23 providers"/>
</dbReference>
<dbReference type="DNASU" id="636"/>
<dbReference type="Ensembl" id="ENST00000548411.6">
    <molecule id="Q96G01-4"/>
    <property type="protein sequence ID" value="ENSP00000446793.1"/>
    <property type="gene ID" value="ENSG00000151746.15"/>
</dbReference>
<dbReference type="Ensembl" id="ENST00000551848.1">
    <molecule id="Q96G01-2"/>
    <property type="protein sequence ID" value="ENSP00000448933.1"/>
    <property type="gene ID" value="ENSG00000151746.15"/>
</dbReference>
<dbReference type="Ensembl" id="ENST00000652176.1">
    <molecule id="Q96G01-1"/>
    <property type="protein sequence ID" value="ENSP00000498700.1"/>
    <property type="gene ID" value="ENSG00000151746.15"/>
</dbReference>
<dbReference type="GeneID" id="636"/>
<dbReference type="KEGG" id="hsa:636"/>
<dbReference type="MANE-Select" id="ENST00000652176.1">
    <property type="protein sequence ID" value="ENSP00000498700.1"/>
    <property type="RefSeq nucleotide sequence ID" value="NM_001714.4"/>
    <property type="RefSeq protein sequence ID" value="NP_001705.2"/>
</dbReference>
<dbReference type="UCSC" id="uc001rku.4">
    <molecule id="Q96G01-1"/>
    <property type="organism name" value="human"/>
</dbReference>
<dbReference type="AGR" id="HGNC:1049"/>
<dbReference type="CTD" id="636"/>
<dbReference type="DisGeNET" id="636"/>
<dbReference type="GeneCards" id="BICD1"/>
<dbReference type="HGNC" id="HGNC:1049">
    <property type="gene designation" value="BICD1"/>
</dbReference>
<dbReference type="HPA" id="ENSG00000151746">
    <property type="expression patterns" value="Low tissue specificity"/>
</dbReference>
<dbReference type="MalaCards" id="BICD1"/>
<dbReference type="MIM" id="602204">
    <property type="type" value="gene"/>
</dbReference>
<dbReference type="neXtProt" id="NX_Q96G01"/>
<dbReference type="OpenTargets" id="ENSG00000151746"/>
<dbReference type="PharmGKB" id="PA25352"/>
<dbReference type="VEuPathDB" id="HostDB:ENSG00000151746"/>
<dbReference type="eggNOG" id="KOG0999">
    <property type="taxonomic scope" value="Eukaryota"/>
</dbReference>
<dbReference type="GeneTree" id="ENSGT00940000154471"/>
<dbReference type="HOGENOM" id="CLU_2399043_0_0_1"/>
<dbReference type="InParanoid" id="Q96G01"/>
<dbReference type="OMA" id="KAEHDCE"/>
<dbReference type="OrthoDB" id="10069295at2759"/>
<dbReference type="PAN-GO" id="Q96G01">
    <property type="GO annotations" value="10 GO annotations based on evolutionary models"/>
</dbReference>
<dbReference type="PhylomeDB" id="Q96G01"/>
<dbReference type="TreeFam" id="TF323833"/>
<dbReference type="PathwayCommons" id="Q96G01"/>
<dbReference type="Reactome" id="R-HSA-6811436">
    <property type="pathway name" value="COPI-independent Golgi-to-ER retrograde traffic"/>
</dbReference>
<dbReference type="SignaLink" id="Q96G01"/>
<dbReference type="SIGNOR" id="Q96G01"/>
<dbReference type="BioGRID-ORCS" id="636">
    <property type="hits" value="11 hits in 1156 CRISPR screens"/>
</dbReference>
<dbReference type="ChiTaRS" id="BICD1">
    <property type="organism name" value="human"/>
</dbReference>
<dbReference type="GeneWiki" id="BICD1"/>
<dbReference type="GenomeRNAi" id="636"/>
<dbReference type="Pharos" id="Q96G01">
    <property type="development level" value="Tbio"/>
</dbReference>
<dbReference type="PRO" id="PR:Q96G01"/>
<dbReference type="Proteomes" id="UP000005640">
    <property type="component" value="Chromosome 12"/>
</dbReference>
<dbReference type="RNAct" id="Q96G01">
    <property type="molecule type" value="protein"/>
</dbReference>
<dbReference type="Bgee" id="ENSG00000151746">
    <property type="expression patterns" value="Expressed in ventricular zone and 182 other cell types or tissues"/>
</dbReference>
<dbReference type="ExpressionAtlas" id="Q96G01">
    <property type="expression patterns" value="baseline and differential"/>
</dbReference>
<dbReference type="GO" id="GO:0005813">
    <property type="term" value="C:centrosome"/>
    <property type="evidence" value="ECO:0000315"/>
    <property type="project" value="ARUK-UCL"/>
</dbReference>
<dbReference type="GO" id="GO:0031410">
    <property type="term" value="C:cytoplasmic vesicle"/>
    <property type="evidence" value="ECO:0000314"/>
    <property type="project" value="BHF-UCL"/>
</dbReference>
<dbReference type="GO" id="GO:0005856">
    <property type="term" value="C:cytoskeleton"/>
    <property type="evidence" value="ECO:0000303"/>
    <property type="project" value="UniProtKB"/>
</dbReference>
<dbReference type="GO" id="GO:0005829">
    <property type="term" value="C:cytosol"/>
    <property type="evidence" value="ECO:0000314"/>
    <property type="project" value="BHF-UCL"/>
</dbReference>
<dbReference type="GO" id="GO:0005794">
    <property type="term" value="C:Golgi apparatus"/>
    <property type="evidence" value="ECO:0000314"/>
    <property type="project" value="UniProtKB"/>
</dbReference>
<dbReference type="GO" id="GO:0016020">
    <property type="term" value="C:membrane"/>
    <property type="evidence" value="ECO:0000314"/>
    <property type="project" value="BHF-UCL"/>
</dbReference>
<dbReference type="GO" id="GO:0048471">
    <property type="term" value="C:perinuclear region of cytoplasm"/>
    <property type="evidence" value="ECO:0000314"/>
    <property type="project" value="BHF-UCL"/>
</dbReference>
<dbReference type="GO" id="GO:0099503">
    <property type="term" value="C:secretory vesicle"/>
    <property type="evidence" value="ECO:0000314"/>
    <property type="project" value="BHF-UCL"/>
</dbReference>
<dbReference type="GO" id="GO:0005802">
    <property type="term" value="C:trans-Golgi network"/>
    <property type="evidence" value="ECO:0000314"/>
    <property type="project" value="BHF-UCL"/>
</dbReference>
<dbReference type="GO" id="GO:0008093">
    <property type="term" value="F:cytoskeletal anchor activity"/>
    <property type="evidence" value="ECO:0000314"/>
    <property type="project" value="BHF-UCL"/>
</dbReference>
<dbReference type="GO" id="GO:0034452">
    <property type="term" value="F:dynactin binding"/>
    <property type="evidence" value="ECO:0000314"/>
    <property type="project" value="BHF-UCL"/>
</dbReference>
<dbReference type="GO" id="GO:0070840">
    <property type="term" value="F:dynein complex binding"/>
    <property type="evidence" value="ECO:0000314"/>
    <property type="project" value="BHF-UCL"/>
</dbReference>
<dbReference type="GO" id="GO:0045505">
    <property type="term" value="F:dynein intermediate chain binding"/>
    <property type="evidence" value="ECO:0000314"/>
    <property type="project" value="ARUK-UCL"/>
</dbReference>
<dbReference type="GO" id="GO:0019901">
    <property type="term" value="F:protein kinase binding"/>
    <property type="evidence" value="ECO:0000353"/>
    <property type="project" value="ARUK-UCL"/>
</dbReference>
<dbReference type="GO" id="GO:0031871">
    <property type="term" value="F:proteinase activated receptor binding"/>
    <property type="evidence" value="ECO:0000250"/>
    <property type="project" value="BHF-UCL"/>
</dbReference>
<dbReference type="GO" id="GO:0031267">
    <property type="term" value="F:small GTPase binding"/>
    <property type="evidence" value="ECO:0000353"/>
    <property type="project" value="BHF-UCL"/>
</dbReference>
<dbReference type="GO" id="GO:0005200">
    <property type="term" value="F:structural constituent of cytoskeleton"/>
    <property type="evidence" value="ECO:0000304"/>
    <property type="project" value="ProtInc"/>
</dbReference>
<dbReference type="GO" id="GO:0009653">
    <property type="term" value="P:anatomical structure morphogenesis"/>
    <property type="evidence" value="ECO:0000304"/>
    <property type="project" value="ProtInc"/>
</dbReference>
<dbReference type="GO" id="GO:0008298">
    <property type="term" value="P:intracellular mRNA localization"/>
    <property type="evidence" value="ECO:0000303"/>
    <property type="project" value="UniProtKB"/>
</dbReference>
<dbReference type="GO" id="GO:0072393">
    <property type="term" value="P:microtubule anchoring at microtubule organizing center"/>
    <property type="evidence" value="ECO:0000250"/>
    <property type="project" value="BHF-UCL"/>
</dbReference>
<dbReference type="GO" id="GO:0072385">
    <property type="term" value="P:minus-end-directed organelle transport along microtubule"/>
    <property type="evidence" value="ECO:0000315"/>
    <property type="project" value="BHF-UCL"/>
</dbReference>
<dbReference type="GO" id="GO:1900737">
    <property type="term" value="P:negative regulation of phospholipase C-activating G protein-coupled receptor signaling pathway"/>
    <property type="evidence" value="ECO:0000250"/>
    <property type="project" value="BHF-UCL"/>
</dbReference>
<dbReference type="GO" id="GO:1904781">
    <property type="term" value="P:positive regulation of protein localization to centrosome"/>
    <property type="evidence" value="ECO:0000316"/>
    <property type="project" value="ARUK-UCL"/>
</dbReference>
<dbReference type="GO" id="GO:0048260">
    <property type="term" value="P:positive regulation of receptor-mediated endocytosis"/>
    <property type="evidence" value="ECO:0000315"/>
    <property type="project" value="BHF-UCL"/>
</dbReference>
<dbReference type="GO" id="GO:0033365">
    <property type="term" value="P:protein localization to organelle"/>
    <property type="evidence" value="ECO:0000314"/>
    <property type="project" value="BHF-UCL"/>
</dbReference>
<dbReference type="GO" id="GO:0070507">
    <property type="term" value="P:regulation of microtubule cytoskeleton organization"/>
    <property type="evidence" value="ECO:0000316"/>
    <property type="project" value="ARUK-UCL"/>
</dbReference>
<dbReference type="GO" id="GO:0006396">
    <property type="term" value="P:RNA processing"/>
    <property type="evidence" value="ECO:0000304"/>
    <property type="project" value="ProtInc"/>
</dbReference>
<dbReference type="GO" id="GO:0034063">
    <property type="term" value="P:stress granule assembly"/>
    <property type="evidence" value="ECO:0000250"/>
    <property type="project" value="BHF-UCL"/>
</dbReference>
<dbReference type="GO" id="GO:0016032">
    <property type="term" value="P:viral process"/>
    <property type="evidence" value="ECO:0000315"/>
    <property type="project" value="BHF-UCL"/>
</dbReference>
<dbReference type="Gene3D" id="6.10.250.2470">
    <property type="match status" value="1"/>
</dbReference>
<dbReference type="InterPro" id="IPR018477">
    <property type="entry name" value="BICD"/>
</dbReference>
<dbReference type="PANTHER" id="PTHR31233">
    <property type="entry name" value="BICAUDAL D FAMILY MEMBER"/>
    <property type="match status" value="1"/>
</dbReference>
<dbReference type="PANTHER" id="PTHR31233:SF3">
    <property type="entry name" value="PROTEIN BICAUDAL D HOMOLOG 1"/>
    <property type="match status" value="1"/>
</dbReference>
<dbReference type="Pfam" id="PF09730">
    <property type="entry name" value="BicD"/>
    <property type="match status" value="1"/>
</dbReference>
<keyword id="KW-0025">Alternative splicing</keyword>
<keyword id="KW-0175">Coiled coil</keyword>
<keyword id="KW-0333">Golgi apparatus</keyword>
<keyword id="KW-0945">Host-virus interaction</keyword>
<keyword id="KW-1267">Proteomics identification</keyword>
<keyword id="KW-1185">Reference proteome</keyword>
<gene>
    <name type="primary">BICD1</name>
</gene>
<feature type="chain" id="PRO_0000205357" description="Protein bicaudal D homolog 1">
    <location>
        <begin position="1"/>
        <end position="975"/>
    </location>
</feature>
<feature type="region of interest" description="Disordered" evidence="3">
    <location>
        <begin position="383"/>
        <end position="403"/>
    </location>
</feature>
<feature type="region of interest" description="Disordered" evidence="3">
    <location>
        <begin position="545"/>
        <end position="616"/>
    </location>
</feature>
<feature type="region of interest" description="Interaction with RAB6A">
    <location>
        <begin position="663"/>
        <end position="803"/>
    </location>
</feature>
<feature type="region of interest" description="Disordered" evidence="3">
    <location>
        <begin position="800"/>
        <end position="824"/>
    </location>
</feature>
<feature type="region of interest" description="Disordered" evidence="3">
    <location>
        <begin position="836"/>
        <end position="877"/>
    </location>
</feature>
<feature type="region of interest" description="Disordered" evidence="3">
    <location>
        <begin position="922"/>
        <end position="975"/>
    </location>
</feature>
<feature type="coiled-coil region" evidence="2">
    <location>
        <begin position="1"/>
        <end position="265"/>
    </location>
</feature>
<feature type="coiled-coil region" evidence="2">
    <location>
        <begin position="319"/>
        <end position="496"/>
    </location>
</feature>
<feature type="coiled-coil region" evidence="2">
    <location>
        <begin position="663"/>
        <end position="803"/>
    </location>
</feature>
<feature type="compositionally biased region" description="Basic and acidic residues" evidence="3">
    <location>
        <begin position="385"/>
        <end position="403"/>
    </location>
</feature>
<feature type="compositionally biased region" description="Basic and acidic residues" evidence="3">
    <location>
        <begin position="581"/>
        <end position="590"/>
    </location>
</feature>
<feature type="compositionally biased region" description="Polar residues" evidence="3">
    <location>
        <begin position="592"/>
        <end position="602"/>
    </location>
</feature>
<feature type="compositionally biased region" description="Polar residues" evidence="3">
    <location>
        <begin position="840"/>
        <end position="877"/>
    </location>
</feature>
<feature type="splice variant" id="VSP_007961" description="In isoform 2." evidence="8">
    <original>AFGQSFSIHRKVAEDGETREET</original>
    <variation>VSCLSPLPFLALTPPTRKAHSS</variation>
    <location>
        <begin position="72"/>
        <end position="93"/>
    </location>
</feature>
<feature type="splice variant" id="VSP_007962" description="In isoform 2." evidence="8">
    <location>
        <begin position="94"/>
        <end position="975"/>
    </location>
</feature>
<feature type="splice variant" id="VSP_045637" description="In isoform 4." evidence="7">
    <original>VSGEASVTVPTIDTY</original>
    <variation>IVSSLLPPYRHSAHN</variation>
    <location>
        <begin position="821"/>
        <end position="835"/>
    </location>
</feature>
<feature type="splice variant" id="VSP_045638" description="In isoform 4." evidence="7">
    <location>
        <begin position="836"/>
        <end position="975"/>
    </location>
</feature>
<feature type="splice variant" id="VSP_007963" description="In isoform 3." evidence="9">
    <original>QFSPSLCDQSRPRTSG</original>
    <variation>YACSDLHSTVQWPDFS</variation>
    <location>
        <begin position="858"/>
        <end position="873"/>
    </location>
</feature>
<feature type="splice variant" id="VSP_007964" description="In isoform 3." evidence="9">
    <location>
        <begin position="874"/>
        <end position="975"/>
    </location>
</feature>
<feature type="sequence variant" id="VAR_069060" description="In dbSNP:rs200845476." evidence="4">
    <original>T</original>
    <variation>A</variation>
    <location>
        <position position="778"/>
    </location>
</feature>
<feature type="sequence conflict" description="In Ref. 1; AAB94805." evidence="10" ref="1">
    <original>A</original>
    <variation>P</variation>
    <location>
        <position position="588"/>
    </location>
</feature>
<feature type="sequence conflict" description="In Ref. 1; AAB94805." evidence="10" ref="1">
    <original>A</original>
    <variation>T</variation>
    <location>
        <position position="746"/>
    </location>
</feature>
<feature type="sequence conflict" description="In Ref. 1; AAB94806." evidence="10" ref="1">
    <original>D</original>
    <variation>G</variation>
    <location>
        <position position="796"/>
    </location>
</feature>
<evidence type="ECO:0000250" key="1"/>
<evidence type="ECO:0000255" key="2"/>
<evidence type="ECO:0000256" key="3">
    <source>
        <dbReference type="SAM" id="MobiDB-lite"/>
    </source>
</evidence>
<evidence type="ECO:0000269" key="4">
    <source>
    </source>
</evidence>
<evidence type="ECO:0000269" key="5">
    <source>
    </source>
</evidence>
<evidence type="ECO:0000269" key="6">
    <source>
    </source>
</evidence>
<evidence type="ECO:0000303" key="7">
    <source>
    </source>
</evidence>
<evidence type="ECO:0000303" key="8">
    <source>
    </source>
</evidence>
<evidence type="ECO:0000303" key="9">
    <source>
    </source>
</evidence>
<evidence type="ECO:0000305" key="10"/>